<organism>
    <name type="scientific">Dictyostelium discoideum</name>
    <name type="common">Social amoeba</name>
    <dbReference type="NCBI Taxonomy" id="44689"/>
    <lineage>
        <taxon>Eukaryota</taxon>
        <taxon>Amoebozoa</taxon>
        <taxon>Evosea</taxon>
        <taxon>Eumycetozoa</taxon>
        <taxon>Dictyostelia</taxon>
        <taxon>Dictyosteliales</taxon>
        <taxon>Dictyosteliaceae</taxon>
        <taxon>Dictyostelium</taxon>
    </lineage>
</organism>
<keyword id="KW-0472">Membrane</keyword>
<keyword id="KW-0520">NAD</keyword>
<keyword id="KW-0521">NADP</keyword>
<keyword id="KW-0560">Oxidoreductase</keyword>
<keyword id="KW-0576">Peroxisome</keyword>
<keyword id="KW-1185">Reference proteome</keyword>
<keyword id="KW-0735">Signal-anchor</keyword>
<keyword id="KW-0812">Transmembrane</keyword>
<keyword id="KW-1133">Transmembrane helix</keyword>
<accession>Q8T197</accession>
<accession>Q554Q4</accession>
<sequence length="316" mass="35756">MFFYKIIYFIGFPYIVLRLIVSIILPIASLYFIYCNFIAPKLREKPESSYKNKVVIITGASSGIGAELAKKYARLGCKVTIVARRLDQLEKVKSSFLKDYSRVNDDDILVIKGDLTLIDDCKNMVEKVIEKWSKIDICVWNAGSGSLIEFSKLQGDISIYRDNMELNYFSLVNCTHLVYKYLEQSHGSIIVISSLAGKFGTALRTSYSSSKHAVMGFFNSLRNETKNIQITIVCPGFILTEFHDNLKTLDGKQVERNKGNFMTASQCANEIILAERQGIRELIQTAKGRVGNYLQAIFPELIEFLTHKFASSSVKK</sequence>
<evidence type="ECO:0000250" key="1"/>
<evidence type="ECO:0000255" key="2"/>
<evidence type="ECO:0000255" key="3">
    <source>
        <dbReference type="PROSITE-ProRule" id="PRU10001"/>
    </source>
</evidence>
<evidence type="ECO:0000305" key="4"/>
<feature type="chain" id="PRO_0000327667" description="Dehydrogenase/reductase SDR family protein 7-like">
    <location>
        <begin position="1"/>
        <end position="316"/>
    </location>
</feature>
<feature type="topological domain" description="Cytoplasmic" evidence="2">
    <location>
        <begin position="1"/>
        <end position="18"/>
    </location>
</feature>
<feature type="transmembrane region" description="Helical; Signal-anchor for type II membrane protein" evidence="2">
    <location>
        <begin position="19"/>
        <end position="39"/>
    </location>
</feature>
<feature type="topological domain" description="Peroxisomal" evidence="2">
    <location>
        <begin position="40"/>
        <end position="316"/>
    </location>
</feature>
<feature type="active site" description="Proton acceptor" evidence="3">
    <location>
        <position position="207"/>
    </location>
</feature>
<feature type="binding site" evidence="1">
    <location>
        <begin position="56"/>
        <end position="80"/>
    </location>
    <ligand>
        <name>NAD(+)</name>
        <dbReference type="ChEBI" id="CHEBI:57540"/>
    </ligand>
</feature>
<feature type="binding site" evidence="1">
    <location>
        <position position="194"/>
    </location>
    <ligand>
        <name>substrate</name>
    </ligand>
</feature>
<protein>
    <recommendedName>
        <fullName>Dehydrogenase/reductase SDR family protein 7-like</fullName>
        <ecNumber>1.1.-.-</ecNumber>
    </recommendedName>
</protein>
<gene>
    <name type="ORF">DDB_G0274201</name>
</gene>
<dbReference type="EC" id="1.1.-.-"/>
<dbReference type="EMBL" id="AAFI02000012">
    <property type="protein sequence ID" value="EAL69993.1"/>
    <property type="molecule type" value="Genomic_DNA"/>
</dbReference>
<dbReference type="RefSeq" id="XP_644269.1">
    <property type="nucleotide sequence ID" value="XM_639177.1"/>
</dbReference>
<dbReference type="SMR" id="Q8T197"/>
<dbReference type="FunCoup" id="Q8T197">
    <property type="interactions" value="1"/>
</dbReference>
<dbReference type="STRING" id="44689.Q8T197"/>
<dbReference type="PaxDb" id="44689-DDB0302650"/>
<dbReference type="EnsemblProtists" id="EAL69993">
    <property type="protein sequence ID" value="EAL69993"/>
    <property type="gene ID" value="DDB_G0274201"/>
</dbReference>
<dbReference type="GeneID" id="8619697"/>
<dbReference type="KEGG" id="ddi:DDB_G0274201"/>
<dbReference type="dictyBase" id="DDB_G0274201"/>
<dbReference type="VEuPathDB" id="AmoebaDB:DDB_G0274201"/>
<dbReference type="eggNOG" id="KOG1205">
    <property type="taxonomic scope" value="Eukaryota"/>
</dbReference>
<dbReference type="HOGENOM" id="CLU_010194_2_1_1"/>
<dbReference type="InParanoid" id="Q8T197"/>
<dbReference type="OMA" id="FFSKMDH"/>
<dbReference type="PhylomeDB" id="Q8T197"/>
<dbReference type="PRO" id="PR:Q8T197"/>
<dbReference type="Proteomes" id="UP000002195">
    <property type="component" value="Chromosome 2"/>
</dbReference>
<dbReference type="GO" id="GO:0005829">
    <property type="term" value="C:cytosol"/>
    <property type="evidence" value="ECO:0000318"/>
    <property type="project" value="GO_Central"/>
</dbReference>
<dbReference type="GO" id="GO:0005778">
    <property type="term" value="C:peroxisomal membrane"/>
    <property type="evidence" value="ECO:0007669"/>
    <property type="project" value="UniProtKB-SubCell"/>
</dbReference>
<dbReference type="GO" id="GO:0016491">
    <property type="term" value="F:oxidoreductase activity"/>
    <property type="evidence" value="ECO:0000318"/>
    <property type="project" value="GO_Central"/>
</dbReference>
<dbReference type="Gene3D" id="3.40.50.720">
    <property type="entry name" value="NAD(P)-binding Rossmann-like Domain"/>
    <property type="match status" value="1"/>
</dbReference>
<dbReference type="InterPro" id="IPR036291">
    <property type="entry name" value="NAD(P)-bd_dom_sf"/>
</dbReference>
<dbReference type="InterPro" id="IPR020904">
    <property type="entry name" value="Sc_DH/Rdtase_CS"/>
</dbReference>
<dbReference type="InterPro" id="IPR002347">
    <property type="entry name" value="SDR_fam"/>
</dbReference>
<dbReference type="NCBIfam" id="NF004825">
    <property type="entry name" value="PRK06181.1"/>
    <property type="match status" value="1"/>
</dbReference>
<dbReference type="PANTHER" id="PTHR44196">
    <property type="entry name" value="DEHYDROGENASE/REDUCTASE SDR FAMILY MEMBER 7B"/>
    <property type="match status" value="1"/>
</dbReference>
<dbReference type="PANTHER" id="PTHR44196:SF1">
    <property type="entry name" value="DEHYDROGENASE_REDUCTASE SDR FAMILY MEMBER 7B"/>
    <property type="match status" value="1"/>
</dbReference>
<dbReference type="Pfam" id="PF00106">
    <property type="entry name" value="adh_short"/>
    <property type="match status" value="1"/>
</dbReference>
<dbReference type="PRINTS" id="PR00081">
    <property type="entry name" value="GDHRDH"/>
</dbReference>
<dbReference type="PRINTS" id="PR00080">
    <property type="entry name" value="SDRFAMILY"/>
</dbReference>
<dbReference type="SUPFAM" id="SSF51735">
    <property type="entry name" value="NAD(P)-binding Rossmann-fold domains"/>
    <property type="match status" value="1"/>
</dbReference>
<dbReference type="PROSITE" id="PS00061">
    <property type="entry name" value="ADH_SHORT"/>
    <property type="match status" value="1"/>
</dbReference>
<comment type="function">
    <text evidence="4">Putative oxidoreductase.</text>
</comment>
<comment type="subcellular location">
    <subcellularLocation>
        <location evidence="4">Peroxisome membrane</location>
        <topology evidence="4">Single-pass type II membrane protein</topology>
    </subcellularLocation>
</comment>
<comment type="similarity">
    <text evidence="4">Belongs to the short-chain dehydrogenases/reductases (SDR) family.</text>
</comment>
<name>DHRS7_DICDI</name>
<proteinExistence type="inferred from homology"/>
<reference key="1">
    <citation type="journal article" date="2002" name="Nature">
        <title>Sequence and analysis of chromosome 2 of Dictyostelium discoideum.</title>
        <authorList>
            <person name="Gloeckner G."/>
            <person name="Eichinger L."/>
            <person name="Szafranski K."/>
            <person name="Pachebat J.A."/>
            <person name="Bankier A.T."/>
            <person name="Dear P.H."/>
            <person name="Lehmann R."/>
            <person name="Baumgart C."/>
            <person name="Parra G."/>
            <person name="Abril J.F."/>
            <person name="Guigo R."/>
            <person name="Kumpf K."/>
            <person name="Tunggal B."/>
            <person name="Cox E.C."/>
            <person name="Quail M.A."/>
            <person name="Platzer M."/>
            <person name="Rosenthal A."/>
            <person name="Noegel A.A."/>
        </authorList>
    </citation>
    <scope>NUCLEOTIDE SEQUENCE [LARGE SCALE GENOMIC DNA]</scope>
    <source>
        <strain>AX4</strain>
    </source>
</reference>
<reference key="2">
    <citation type="journal article" date="2005" name="Nature">
        <title>The genome of the social amoeba Dictyostelium discoideum.</title>
        <authorList>
            <person name="Eichinger L."/>
            <person name="Pachebat J.A."/>
            <person name="Gloeckner G."/>
            <person name="Rajandream M.A."/>
            <person name="Sucgang R."/>
            <person name="Berriman M."/>
            <person name="Song J."/>
            <person name="Olsen R."/>
            <person name="Szafranski K."/>
            <person name="Xu Q."/>
            <person name="Tunggal B."/>
            <person name="Kummerfeld S."/>
            <person name="Madera M."/>
            <person name="Konfortov B.A."/>
            <person name="Rivero F."/>
            <person name="Bankier A.T."/>
            <person name="Lehmann R."/>
            <person name="Hamlin N."/>
            <person name="Davies R."/>
            <person name="Gaudet P."/>
            <person name="Fey P."/>
            <person name="Pilcher K."/>
            <person name="Chen G."/>
            <person name="Saunders D."/>
            <person name="Sodergren E.J."/>
            <person name="Davis P."/>
            <person name="Kerhornou A."/>
            <person name="Nie X."/>
            <person name="Hall N."/>
            <person name="Anjard C."/>
            <person name="Hemphill L."/>
            <person name="Bason N."/>
            <person name="Farbrother P."/>
            <person name="Desany B."/>
            <person name="Just E."/>
            <person name="Morio T."/>
            <person name="Rost R."/>
            <person name="Churcher C.M."/>
            <person name="Cooper J."/>
            <person name="Haydock S."/>
            <person name="van Driessche N."/>
            <person name="Cronin A."/>
            <person name="Goodhead I."/>
            <person name="Muzny D.M."/>
            <person name="Mourier T."/>
            <person name="Pain A."/>
            <person name="Lu M."/>
            <person name="Harper D."/>
            <person name="Lindsay R."/>
            <person name="Hauser H."/>
            <person name="James K.D."/>
            <person name="Quiles M."/>
            <person name="Madan Babu M."/>
            <person name="Saito T."/>
            <person name="Buchrieser C."/>
            <person name="Wardroper A."/>
            <person name="Felder M."/>
            <person name="Thangavelu M."/>
            <person name="Johnson D."/>
            <person name="Knights A."/>
            <person name="Loulseged H."/>
            <person name="Mungall K.L."/>
            <person name="Oliver K."/>
            <person name="Price C."/>
            <person name="Quail M.A."/>
            <person name="Urushihara H."/>
            <person name="Hernandez J."/>
            <person name="Rabbinowitsch E."/>
            <person name="Steffen D."/>
            <person name="Sanders M."/>
            <person name="Ma J."/>
            <person name="Kohara Y."/>
            <person name="Sharp S."/>
            <person name="Simmonds M.N."/>
            <person name="Spiegler S."/>
            <person name="Tivey A."/>
            <person name="Sugano S."/>
            <person name="White B."/>
            <person name="Walker D."/>
            <person name="Woodward J.R."/>
            <person name="Winckler T."/>
            <person name="Tanaka Y."/>
            <person name="Shaulsky G."/>
            <person name="Schleicher M."/>
            <person name="Weinstock G.M."/>
            <person name="Rosenthal A."/>
            <person name="Cox E.C."/>
            <person name="Chisholm R.L."/>
            <person name="Gibbs R.A."/>
            <person name="Loomis W.F."/>
            <person name="Platzer M."/>
            <person name="Kay R.R."/>
            <person name="Williams J.G."/>
            <person name="Dear P.H."/>
            <person name="Noegel A.A."/>
            <person name="Barrell B.G."/>
            <person name="Kuspa A."/>
        </authorList>
    </citation>
    <scope>NUCLEOTIDE SEQUENCE [LARGE SCALE GENOMIC DNA]</scope>
    <source>
        <strain>AX4</strain>
    </source>
</reference>